<name>YQGF_FRATF</name>
<reference key="1">
    <citation type="journal article" date="2009" name="PLoS ONE">
        <title>Complete genome sequence of Francisella tularensis subspecies holarctica FTNF002-00.</title>
        <authorList>
            <person name="Barabote R.D."/>
            <person name="Xie G."/>
            <person name="Brettin T.S."/>
            <person name="Hinrichs S.H."/>
            <person name="Fey P.D."/>
            <person name="Jay J.J."/>
            <person name="Engle J.L."/>
            <person name="Godbole S.D."/>
            <person name="Noronha J.M."/>
            <person name="Scheuermann R.H."/>
            <person name="Zhou L.W."/>
            <person name="Lion C."/>
            <person name="Dempsey M.P."/>
        </authorList>
    </citation>
    <scope>NUCLEOTIDE SEQUENCE [LARGE SCALE GENOMIC DNA]</scope>
    <source>
        <strain>FTNF002-00 / FTA</strain>
    </source>
</reference>
<sequence length="136" mass="15510">MFQSLIAIDYGKARIGIASGQMITKTATPIGTVEAYDGVPNWIELDKIIKRWNPSDIIIGLPLDTQNFETDITKSAKDFAKEVQQRYQRKVHLINEAYSTREARWRLEEVKSKKVSHIKVDALAACVILETWMSEN</sequence>
<dbReference type="EC" id="3.1.-.-" evidence="1"/>
<dbReference type="EMBL" id="CP000803">
    <property type="protein sequence ID" value="ABU61760.1"/>
    <property type="molecule type" value="Genomic_DNA"/>
</dbReference>
<dbReference type="SMR" id="A7NCQ7"/>
<dbReference type="KEGG" id="fta:FTA_1285"/>
<dbReference type="HOGENOM" id="CLU_098240_3_0_6"/>
<dbReference type="GO" id="GO:0005829">
    <property type="term" value="C:cytosol"/>
    <property type="evidence" value="ECO:0007669"/>
    <property type="project" value="TreeGrafter"/>
</dbReference>
<dbReference type="GO" id="GO:0004518">
    <property type="term" value="F:nuclease activity"/>
    <property type="evidence" value="ECO:0007669"/>
    <property type="project" value="UniProtKB-KW"/>
</dbReference>
<dbReference type="GO" id="GO:0000967">
    <property type="term" value="P:rRNA 5'-end processing"/>
    <property type="evidence" value="ECO:0007669"/>
    <property type="project" value="UniProtKB-UniRule"/>
</dbReference>
<dbReference type="CDD" id="cd16964">
    <property type="entry name" value="YqgF"/>
    <property type="match status" value="1"/>
</dbReference>
<dbReference type="Gene3D" id="3.30.420.140">
    <property type="entry name" value="YqgF/RNase H-like domain"/>
    <property type="match status" value="1"/>
</dbReference>
<dbReference type="HAMAP" id="MF_00651">
    <property type="entry name" value="Nuclease_YqgF"/>
    <property type="match status" value="1"/>
</dbReference>
<dbReference type="InterPro" id="IPR012337">
    <property type="entry name" value="RNaseH-like_sf"/>
</dbReference>
<dbReference type="InterPro" id="IPR005227">
    <property type="entry name" value="YqgF"/>
</dbReference>
<dbReference type="InterPro" id="IPR006641">
    <property type="entry name" value="YqgF/RNaseH-like_dom"/>
</dbReference>
<dbReference type="InterPro" id="IPR037027">
    <property type="entry name" value="YqgF/RNaseH-like_dom_sf"/>
</dbReference>
<dbReference type="NCBIfam" id="TIGR00250">
    <property type="entry name" value="RNAse_H_YqgF"/>
    <property type="match status" value="1"/>
</dbReference>
<dbReference type="PANTHER" id="PTHR33317">
    <property type="entry name" value="POLYNUCLEOTIDYL TRANSFERASE, RIBONUCLEASE H-LIKE SUPERFAMILY PROTEIN"/>
    <property type="match status" value="1"/>
</dbReference>
<dbReference type="PANTHER" id="PTHR33317:SF4">
    <property type="entry name" value="POLYNUCLEOTIDYL TRANSFERASE, RIBONUCLEASE H-LIKE SUPERFAMILY PROTEIN"/>
    <property type="match status" value="1"/>
</dbReference>
<dbReference type="Pfam" id="PF03652">
    <property type="entry name" value="RuvX"/>
    <property type="match status" value="1"/>
</dbReference>
<dbReference type="SMART" id="SM00732">
    <property type="entry name" value="YqgFc"/>
    <property type="match status" value="1"/>
</dbReference>
<dbReference type="SUPFAM" id="SSF53098">
    <property type="entry name" value="Ribonuclease H-like"/>
    <property type="match status" value="1"/>
</dbReference>
<proteinExistence type="inferred from homology"/>
<feature type="chain" id="PRO_1000061516" description="Putative pre-16S rRNA nuclease">
    <location>
        <begin position="1"/>
        <end position="136"/>
    </location>
</feature>
<protein>
    <recommendedName>
        <fullName evidence="1">Putative pre-16S rRNA nuclease</fullName>
        <ecNumber evidence="1">3.1.-.-</ecNumber>
    </recommendedName>
</protein>
<keyword id="KW-0963">Cytoplasm</keyword>
<keyword id="KW-0378">Hydrolase</keyword>
<keyword id="KW-0540">Nuclease</keyword>
<keyword id="KW-0690">Ribosome biogenesis</keyword>
<gene>
    <name type="ordered locus">FTA_1285</name>
</gene>
<accession>A7NCQ7</accession>
<comment type="function">
    <text evidence="1">Could be a nuclease involved in processing of the 5'-end of pre-16S rRNA.</text>
</comment>
<comment type="subcellular location">
    <subcellularLocation>
        <location evidence="1">Cytoplasm</location>
    </subcellularLocation>
</comment>
<comment type="similarity">
    <text evidence="1">Belongs to the YqgF nuclease family.</text>
</comment>
<evidence type="ECO:0000255" key="1">
    <source>
        <dbReference type="HAMAP-Rule" id="MF_00651"/>
    </source>
</evidence>
<organism>
    <name type="scientific">Francisella tularensis subsp. holarctica (strain FTNF002-00 / FTA)</name>
    <dbReference type="NCBI Taxonomy" id="458234"/>
    <lineage>
        <taxon>Bacteria</taxon>
        <taxon>Pseudomonadati</taxon>
        <taxon>Pseudomonadota</taxon>
        <taxon>Gammaproteobacteria</taxon>
        <taxon>Thiotrichales</taxon>
        <taxon>Francisellaceae</taxon>
        <taxon>Francisella</taxon>
    </lineage>
</organism>